<sequence>MITRLSHLFLRTLRDDPADAEVPSHKLLVRAGYVRRIAPGVYSWLPLGLRVLREVERVVREEMNGIGAQEISLPALLPREPYEASNRWTEYGDGLFRLKDRKGGDYLLGPTHEELFALTVKGEYNSYKDFPVTLYQVQTKYRDEERPRAGILRGREFVMKDSYSFDLTDEGLTASYRAHRDAYERIFSRLGVKYVIVSATSGAMGGSASEEFLAESEIGEDTYVRCLESGYAANVEAVKTLAPEAVPFDGLPAAKVHDTPDTPTIATLVDWANGADLGWTVTAADTLKNILVKTRQPGGKWELLGIGVPGDREVDDKRLGASLEPAEFELLTEADFAANPFLVKGYIGPKALQANGVRYLVDPRIVDGTSWITGADEPGKHVVGLVAGRDFTPDGTIEAAEVRDGDPSPDGAGALVAARGIEIGHVFQLGRKYTDVFSVDVLGENGKPVRPTMGSYGVGVSRLVAVIAEQHHDEKGLRWPAEVSPADVHVVIANKDETAREGAEGLAAELDKAGLEVILDDRKASPGVKFKDSELLGVPLVVVVGRGWGEGKVEVRDRFTGESREVAAESALSEIVKAVRG</sequence>
<protein>
    <recommendedName>
        <fullName evidence="1">Proline--tRNA ligase 1</fullName>
        <ecNumber evidence="1">6.1.1.15</ecNumber>
    </recommendedName>
    <alternativeName>
        <fullName evidence="1">Prolyl-tRNA synthetase 1</fullName>
        <shortName evidence="1">ProRS 1</shortName>
    </alternativeName>
</protein>
<keyword id="KW-0030">Aminoacyl-tRNA synthetase</keyword>
<keyword id="KW-0067">ATP-binding</keyword>
<keyword id="KW-0963">Cytoplasm</keyword>
<keyword id="KW-0436">Ligase</keyword>
<keyword id="KW-0547">Nucleotide-binding</keyword>
<keyword id="KW-0648">Protein biosynthesis</keyword>
<accession>Q0S235</accession>
<reference key="1">
    <citation type="journal article" date="2006" name="Proc. Natl. Acad. Sci. U.S.A.">
        <title>The complete genome of Rhodococcus sp. RHA1 provides insights into a catabolic powerhouse.</title>
        <authorList>
            <person name="McLeod M.P."/>
            <person name="Warren R.L."/>
            <person name="Hsiao W.W.L."/>
            <person name="Araki N."/>
            <person name="Myhre M."/>
            <person name="Fernandes C."/>
            <person name="Miyazawa D."/>
            <person name="Wong W."/>
            <person name="Lillquist A.L."/>
            <person name="Wang D."/>
            <person name="Dosanjh M."/>
            <person name="Hara H."/>
            <person name="Petrescu A."/>
            <person name="Morin R.D."/>
            <person name="Yang G."/>
            <person name="Stott J.M."/>
            <person name="Schein J.E."/>
            <person name="Shin H."/>
            <person name="Smailus D."/>
            <person name="Siddiqui A.S."/>
            <person name="Marra M.A."/>
            <person name="Jones S.J.M."/>
            <person name="Holt R."/>
            <person name="Brinkman F.S.L."/>
            <person name="Miyauchi K."/>
            <person name="Fukuda M."/>
            <person name="Davies J.E."/>
            <person name="Mohn W.W."/>
            <person name="Eltis L.D."/>
        </authorList>
    </citation>
    <scope>NUCLEOTIDE SEQUENCE [LARGE SCALE GENOMIC DNA]</scope>
    <source>
        <strain>RHA1</strain>
    </source>
</reference>
<proteinExistence type="inferred from homology"/>
<gene>
    <name evidence="1" type="primary">proS1</name>
    <name type="ordered locus">RHA1_ro06628</name>
</gene>
<evidence type="ECO:0000255" key="1">
    <source>
        <dbReference type="HAMAP-Rule" id="MF_01569"/>
    </source>
</evidence>
<feature type="chain" id="PRO_0000288371" description="Proline--tRNA ligase 1">
    <location>
        <begin position="1"/>
        <end position="581"/>
    </location>
</feature>
<comment type="function">
    <text evidence="1">Catalyzes the attachment of proline to tRNA(Pro) in a two-step reaction: proline is first activated by ATP to form Pro-AMP and then transferred to the acceptor end of tRNA(Pro). As ProRS can inadvertently accommodate and process non-cognate amino acids such as alanine and cysteine, to avoid such errors it has two additional distinct editing activities against alanine. One activity is designated as 'pretransfer' editing and involves the tRNA(Pro)-independent hydrolysis of activated Ala-AMP. The other activity is designated 'posttransfer' editing and involves deacylation of mischarged Ala-tRNA(Pro). The misacylated Cys-tRNA(Pro) is not edited by ProRS.</text>
</comment>
<comment type="catalytic activity">
    <reaction evidence="1">
        <text>tRNA(Pro) + L-proline + ATP = L-prolyl-tRNA(Pro) + AMP + diphosphate</text>
        <dbReference type="Rhea" id="RHEA:14305"/>
        <dbReference type="Rhea" id="RHEA-COMP:9700"/>
        <dbReference type="Rhea" id="RHEA-COMP:9702"/>
        <dbReference type="ChEBI" id="CHEBI:30616"/>
        <dbReference type="ChEBI" id="CHEBI:33019"/>
        <dbReference type="ChEBI" id="CHEBI:60039"/>
        <dbReference type="ChEBI" id="CHEBI:78442"/>
        <dbReference type="ChEBI" id="CHEBI:78532"/>
        <dbReference type="ChEBI" id="CHEBI:456215"/>
        <dbReference type="EC" id="6.1.1.15"/>
    </reaction>
</comment>
<comment type="subunit">
    <text evidence="1">Homodimer.</text>
</comment>
<comment type="subcellular location">
    <subcellularLocation>
        <location evidence="1">Cytoplasm</location>
    </subcellularLocation>
</comment>
<comment type="domain">
    <text evidence="1">Consists of three domains: the N-terminal catalytic domain, the editing domain and the C-terminal anticodon-binding domain.</text>
</comment>
<comment type="similarity">
    <text evidence="1">Belongs to the class-II aminoacyl-tRNA synthetase family. ProS type 1 subfamily.</text>
</comment>
<name>SYP1_RHOJR</name>
<organism>
    <name type="scientific">Rhodococcus jostii (strain RHA1)</name>
    <dbReference type="NCBI Taxonomy" id="101510"/>
    <lineage>
        <taxon>Bacteria</taxon>
        <taxon>Bacillati</taxon>
        <taxon>Actinomycetota</taxon>
        <taxon>Actinomycetes</taxon>
        <taxon>Mycobacteriales</taxon>
        <taxon>Nocardiaceae</taxon>
        <taxon>Rhodococcus</taxon>
    </lineage>
</organism>
<dbReference type="EC" id="6.1.1.15" evidence="1"/>
<dbReference type="EMBL" id="CP000431">
    <property type="protein sequence ID" value="ABG98401.1"/>
    <property type="molecule type" value="Genomic_DNA"/>
</dbReference>
<dbReference type="RefSeq" id="WP_009479792.1">
    <property type="nucleotide sequence ID" value="NC_008268.1"/>
</dbReference>
<dbReference type="SMR" id="Q0S235"/>
<dbReference type="KEGG" id="rha:RHA1_ro06628"/>
<dbReference type="eggNOG" id="COG0442">
    <property type="taxonomic scope" value="Bacteria"/>
</dbReference>
<dbReference type="HOGENOM" id="CLU_016739_0_0_11"/>
<dbReference type="OrthoDB" id="9809052at2"/>
<dbReference type="Proteomes" id="UP000008710">
    <property type="component" value="Chromosome"/>
</dbReference>
<dbReference type="GO" id="GO:0005829">
    <property type="term" value="C:cytosol"/>
    <property type="evidence" value="ECO:0007669"/>
    <property type="project" value="TreeGrafter"/>
</dbReference>
<dbReference type="GO" id="GO:0002161">
    <property type="term" value="F:aminoacyl-tRNA deacylase activity"/>
    <property type="evidence" value="ECO:0007669"/>
    <property type="project" value="InterPro"/>
</dbReference>
<dbReference type="GO" id="GO:0005524">
    <property type="term" value="F:ATP binding"/>
    <property type="evidence" value="ECO:0007669"/>
    <property type="project" value="UniProtKB-UniRule"/>
</dbReference>
<dbReference type="GO" id="GO:0004827">
    <property type="term" value="F:proline-tRNA ligase activity"/>
    <property type="evidence" value="ECO:0007669"/>
    <property type="project" value="UniProtKB-UniRule"/>
</dbReference>
<dbReference type="GO" id="GO:0006433">
    <property type="term" value="P:prolyl-tRNA aminoacylation"/>
    <property type="evidence" value="ECO:0007669"/>
    <property type="project" value="UniProtKB-UniRule"/>
</dbReference>
<dbReference type="FunFam" id="3.30.930.10:FF:000065">
    <property type="entry name" value="Proline--tRNA ligase"/>
    <property type="match status" value="1"/>
</dbReference>
<dbReference type="FunFam" id="3.30.930.10:FF:000070">
    <property type="entry name" value="Proline--tRNA ligase"/>
    <property type="match status" value="1"/>
</dbReference>
<dbReference type="Gene3D" id="3.40.50.800">
    <property type="entry name" value="Anticodon-binding domain"/>
    <property type="match status" value="1"/>
</dbReference>
<dbReference type="Gene3D" id="3.30.930.10">
    <property type="entry name" value="Bira Bifunctional Protein, Domain 2"/>
    <property type="match status" value="2"/>
</dbReference>
<dbReference type="Gene3D" id="3.90.960.10">
    <property type="entry name" value="YbaK/aminoacyl-tRNA synthetase-associated domain"/>
    <property type="match status" value="1"/>
</dbReference>
<dbReference type="HAMAP" id="MF_01569">
    <property type="entry name" value="Pro_tRNA_synth_type1"/>
    <property type="match status" value="1"/>
</dbReference>
<dbReference type="InterPro" id="IPR002314">
    <property type="entry name" value="aa-tRNA-synt_IIb"/>
</dbReference>
<dbReference type="InterPro" id="IPR006195">
    <property type="entry name" value="aa-tRNA-synth_II"/>
</dbReference>
<dbReference type="InterPro" id="IPR045864">
    <property type="entry name" value="aa-tRNA-synth_II/BPL/LPL"/>
</dbReference>
<dbReference type="InterPro" id="IPR004154">
    <property type="entry name" value="Anticodon-bd"/>
</dbReference>
<dbReference type="InterPro" id="IPR036621">
    <property type="entry name" value="Anticodon-bd_dom_sf"/>
</dbReference>
<dbReference type="InterPro" id="IPR002316">
    <property type="entry name" value="Pro-tRNA-ligase_IIa"/>
</dbReference>
<dbReference type="InterPro" id="IPR004500">
    <property type="entry name" value="Pro-tRNA-synth_IIa_bac-type"/>
</dbReference>
<dbReference type="InterPro" id="IPR023717">
    <property type="entry name" value="Pro-tRNA-Synthase_IIa_type1"/>
</dbReference>
<dbReference type="InterPro" id="IPR050062">
    <property type="entry name" value="Pro-tRNA_synthetase"/>
</dbReference>
<dbReference type="InterPro" id="IPR036754">
    <property type="entry name" value="YbaK/aa-tRNA-synt-asso_dom_sf"/>
</dbReference>
<dbReference type="InterPro" id="IPR007214">
    <property type="entry name" value="YbaK/aa-tRNA-synth-assoc-dom"/>
</dbReference>
<dbReference type="NCBIfam" id="NF006625">
    <property type="entry name" value="PRK09194.1"/>
    <property type="match status" value="1"/>
</dbReference>
<dbReference type="NCBIfam" id="TIGR00409">
    <property type="entry name" value="proS_fam_II"/>
    <property type="match status" value="1"/>
</dbReference>
<dbReference type="PANTHER" id="PTHR42753">
    <property type="entry name" value="MITOCHONDRIAL RIBOSOME PROTEIN L39/PROLYL-TRNA LIGASE FAMILY MEMBER"/>
    <property type="match status" value="1"/>
</dbReference>
<dbReference type="PANTHER" id="PTHR42753:SF2">
    <property type="entry name" value="PROLINE--TRNA LIGASE"/>
    <property type="match status" value="1"/>
</dbReference>
<dbReference type="Pfam" id="PF03129">
    <property type="entry name" value="HGTP_anticodon"/>
    <property type="match status" value="1"/>
</dbReference>
<dbReference type="Pfam" id="PF00587">
    <property type="entry name" value="tRNA-synt_2b"/>
    <property type="match status" value="1"/>
</dbReference>
<dbReference type="Pfam" id="PF04073">
    <property type="entry name" value="tRNA_edit"/>
    <property type="match status" value="1"/>
</dbReference>
<dbReference type="PRINTS" id="PR01046">
    <property type="entry name" value="TRNASYNTHPRO"/>
</dbReference>
<dbReference type="SUPFAM" id="SSF52954">
    <property type="entry name" value="Class II aaRS ABD-related"/>
    <property type="match status" value="1"/>
</dbReference>
<dbReference type="SUPFAM" id="SSF55681">
    <property type="entry name" value="Class II aaRS and biotin synthetases"/>
    <property type="match status" value="1"/>
</dbReference>
<dbReference type="SUPFAM" id="SSF55826">
    <property type="entry name" value="YbaK/ProRS associated domain"/>
    <property type="match status" value="1"/>
</dbReference>
<dbReference type="PROSITE" id="PS50862">
    <property type="entry name" value="AA_TRNA_LIGASE_II"/>
    <property type="match status" value="1"/>
</dbReference>